<organism>
    <name type="scientific">Ranoidea aurea</name>
    <name type="common">Green and golden bell frog</name>
    <name type="synonym">Litoria aurea</name>
    <dbReference type="NCBI Taxonomy" id="8371"/>
    <lineage>
        <taxon>Eukaryota</taxon>
        <taxon>Metazoa</taxon>
        <taxon>Chordata</taxon>
        <taxon>Craniata</taxon>
        <taxon>Vertebrata</taxon>
        <taxon>Euteleostomi</taxon>
        <taxon>Amphibia</taxon>
        <taxon>Batrachia</taxon>
        <taxon>Anura</taxon>
        <taxon>Neobatrachia</taxon>
        <taxon>Hyloidea</taxon>
        <taxon>Hylidae</taxon>
        <taxon>Pelodryadinae</taxon>
        <taxon>Ranoidea</taxon>
    </lineage>
</organism>
<name>AUR32_RANAE</name>
<keyword id="KW-0027">Amidation</keyword>
<keyword id="KW-0878">Amphibian defense peptide</keyword>
<keyword id="KW-0044">Antibiotic</keyword>
<keyword id="KW-0929">Antimicrobial</keyword>
<keyword id="KW-0903">Direct protein sequencing</keyword>
<keyword id="KW-0964">Secreted</keyword>
<reference key="1">
    <citation type="journal article" date="2000" name="Eur. J. Biochem.">
        <title>The antibiotic and anticancer active aurein peptides from the australian bell frogs Litoria aurea and Litoria raniformis the solution structure of aurein 1.2.</title>
        <authorList>
            <person name="Rozek T."/>
            <person name="Wegener K.L."/>
            <person name="Bowie J.H."/>
            <person name="Olver I.N."/>
            <person name="Carver J.A."/>
            <person name="Wallace J.C."/>
            <person name="Tyler M.J."/>
        </authorList>
    </citation>
    <scope>PROTEIN SEQUENCE</scope>
    <scope>AMIDATION AT ILE-17</scope>
    <scope>FUNCTION</scope>
    <source>
        <tissue>Skin secretion</tissue>
    </source>
</reference>
<feature type="peptide" id="PRO_0000043725" description="Aurein-3.2">
    <location>
        <begin position="1"/>
        <end position="17"/>
    </location>
</feature>
<feature type="modified residue" description="Isoleucine amide" evidence="1">
    <location>
        <position position="17"/>
    </location>
</feature>
<protein>
    <recommendedName>
        <fullName>Aurein-3.2</fullName>
    </recommendedName>
</protein>
<sequence>GLFDIVKKIAGHIASSI</sequence>
<accession>P69023</accession>
<accession>P82395</accession>
<proteinExistence type="evidence at protein level"/>
<evidence type="ECO:0000269" key="1">
    <source>
    </source>
</evidence>
<evidence type="ECO:0000305" key="2"/>
<comment type="function">
    <text evidence="1">Has antimicrobial activity against L.lactis, L.innocua, M.luteus, S.aureus, S.epidermidis and S.uberis. Probably acts by disturbing membrane functions with its amphipathic structure. Shows anticancer activity.</text>
</comment>
<comment type="subcellular location">
    <subcellularLocation>
        <location>Secreted</location>
    </subcellularLocation>
</comment>
<comment type="tissue specificity">
    <text>Expressed by the skin dorsal glands.</text>
</comment>
<comment type="similarity">
    <text evidence="2">Belongs to the frog skin active peptide (FSAP) family. Aurein subfamily.</text>
</comment>
<dbReference type="GO" id="GO:0005576">
    <property type="term" value="C:extracellular region"/>
    <property type="evidence" value="ECO:0007669"/>
    <property type="project" value="UniProtKB-SubCell"/>
</dbReference>
<dbReference type="GO" id="GO:0042742">
    <property type="term" value="P:defense response to bacterium"/>
    <property type="evidence" value="ECO:0007669"/>
    <property type="project" value="UniProtKB-KW"/>
</dbReference>
<dbReference type="InterPro" id="IPR013157">
    <property type="entry name" value="Aurein_antimicrobial_peptide"/>
</dbReference>
<dbReference type="Pfam" id="PF08256">
    <property type="entry name" value="Antimicrobial20"/>
    <property type="match status" value="1"/>
</dbReference>